<sequence>MKRIVLLRLGHRPERDKRITTHVGLTARMLGAEGMLLASDDQGIVHSLEDVVRRWGGDFYIKNNVNFKQEIRAWKEEGGKVCHLSMYGVNLPDVTGELKKCKKLMIVVGAEKVPPEIYQLANWNVAVGSQPHSEVAAVAITMDRIAEGEPLEKEFPGAELTIVPAERGKHVIENIRE</sequence>
<organism>
    <name type="scientific">Methanosarcina acetivorans (strain ATCC 35395 / DSM 2834 / JCM 12185 / C2A)</name>
    <dbReference type="NCBI Taxonomy" id="188937"/>
    <lineage>
        <taxon>Archaea</taxon>
        <taxon>Methanobacteriati</taxon>
        <taxon>Methanobacteriota</taxon>
        <taxon>Stenosarchaea group</taxon>
        <taxon>Methanomicrobia</taxon>
        <taxon>Methanosarcinales</taxon>
        <taxon>Methanosarcinaceae</taxon>
        <taxon>Methanosarcina</taxon>
    </lineage>
</organism>
<keyword id="KW-0963">Cytoplasm</keyword>
<keyword id="KW-0489">Methyltransferase</keyword>
<keyword id="KW-1185">Reference proteome</keyword>
<keyword id="KW-0949">S-adenosyl-L-methionine</keyword>
<keyword id="KW-0808">Transferase</keyword>
<keyword id="KW-0819">tRNA processing</keyword>
<evidence type="ECO:0000255" key="1">
    <source>
        <dbReference type="HAMAP-Rule" id="MF_00077"/>
    </source>
</evidence>
<comment type="function">
    <text evidence="1">Specifically catalyzes the AdoMet-dependent 2'-O-ribose methylation of cytidine at position 56 in tRNAs.</text>
</comment>
<comment type="catalytic activity">
    <reaction evidence="1">
        <text>cytidine(56) in tRNA + S-adenosyl-L-methionine = 2'-O-methylcytidine(56) in tRNA + S-adenosyl-L-homocysteine + H(+)</text>
        <dbReference type="Rhea" id="RHEA:42968"/>
        <dbReference type="Rhea" id="RHEA-COMP:10308"/>
        <dbReference type="Rhea" id="RHEA-COMP:10309"/>
        <dbReference type="ChEBI" id="CHEBI:15378"/>
        <dbReference type="ChEBI" id="CHEBI:57856"/>
        <dbReference type="ChEBI" id="CHEBI:59789"/>
        <dbReference type="ChEBI" id="CHEBI:74495"/>
        <dbReference type="ChEBI" id="CHEBI:82748"/>
        <dbReference type="EC" id="2.1.1.206"/>
    </reaction>
</comment>
<comment type="subunit">
    <text evidence="1">Homodimer.</text>
</comment>
<comment type="subcellular location">
    <subcellularLocation>
        <location evidence="1">Cytoplasm</location>
    </subcellularLocation>
</comment>
<comment type="similarity">
    <text evidence="1">Belongs to the aTrm56 family.</text>
</comment>
<feature type="chain" id="PRO_0000146928" description="tRNA (cytidine(56)-2'-O)-methyltransferase">
    <location>
        <begin position="1"/>
        <end position="177"/>
    </location>
</feature>
<feature type="binding site" evidence="1">
    <location>
        <position position="84"/>
    </location>
    <ligand>
        <name>S-adenosyl-L-methionine</name>
        <dbReference type="ChEBI" id="CHEBI:59789"/>
    </ligand>
</feature>
<feature type="binding site" evidence="1">
    <location>
        <begin position="109"/>
        <end position="113"/>
    </location>
    <ligand>
        <name>S-adenosyl-L-methionine</name>
        <dbReference type="ChEBI" id="CHEBI:59789"/>
    </ligand>
</feature>
<name>TRM56_METAC</name>
<protein>
    <recommendedName>
        <fullName evidence="1">tRNA (cytidine(56)-2'-O)-methyltransferase</fullName>
        <ecNumber evidence="1">2.1.1.206</ecNumber>
    </recommendedName>
    <alternativeName>
        <fullName evidence="1">tRNA ribose 2'-O-methyltransferase aTrm56</fullName>
    </alternativeName>
</protein>
<dbReference type="EC" id="2.1.1.206" evidence="1"/>
<dbReference type="EMBL" id="AE010299">
    <property type="protein sequence ID" value="AAM06612.1"/>
    <property type="molecule type" value="Genomic_DNA"/>
</dbReference>
<dbReference type="RefSeq" id="WP_011023175.1">
    <property type="nucleotide sequence ID" value="NC_003552.1"/>
</dbReference>
<dbReference type="SMR" id="Q8TL02"/>
<dbReference type="FunCoup" id="Q8TL02">
    <property type="interactions" value="2"/>
</dbReference>
<dbReference type="STRING" id="188937.MA_3241"/>
<dbReference type="EnsemblBacteria" id="AAM06612">
    <property type="protein sequence ID" value="AAM06612"/>
    <property type="gene ID" value="MA_3241"/>
</dbReference>
<dbReference type="GeneID" id="1475134"/>
<dbReference type="KEGG" id="mac:MA_3241"/>
<dbReference type="HOGENOM" id="CLU_123709_0_0_2"/>
<dbReference type="InParanoid" id="Q8TL02"/>
<dbReference type="OrthoDB" id="14397at2157"/>
<dbReference type="PhylomeDB" id="Q8TL02"/>
<dbReference type="Proteomes" id="UP000002487">
    <property type="component" value="Chromosome"/>
</dbReference>
<dbReference type="GO" id="GO:0005737">
    <property type="term" value="C:cytoplasm"/>
    <property type="evidence" value="ECO:0007669"/>
    <property type="project" value="UniProtKB-SubCell"/>
</dbReference>
<dbReference type="GO" id="GO:0106059">
    <property type="term" value="F:tRNA (cytidine(56)-2'-O)-methyltransferase activity"/>
    <property type="evidence" value="ECO:0007669"/>
    <property type="project" value="UniProtKB-EC"/>
</dbReference>
<dbReference type="GO" id="GO:0002128">
    <property type="term" value="P:tRNA nucleoside ribose methylation"/>
    <property type="evidence" value="ECO:0007669"/>
    <property type="project" value="UniProtKB-UniRule"/>
</dbReference>
<dbReference type="CDD" id="cd18083">
    <property type="entry name" value="aTrm56-like"/>
    <property type="match status" value="1"/>
</dbReference>
<dbReference type="Gene3D" id="3.40.1280.10">
    <property type="match status" value="1"/>
</dbReference>
<dbReference type="HAMAP" id="MF_00077">
    <property type="entry name" value="tRNA_methyltr_aTrm56"/>
    <property type="match status" value="1"/>
</dbReference>
<dbReference type="InterPro" id="IPR029028">
    <property type="entry name" value="Alpha/beta_knot_MTases"/>
</dbReference>
<dbReference type="InterPro" id="IPR029026">
    <property type="entry name" value="tRNA_m1G_MTases_N"/>
</dbReference>
<dbReference type="InterPro" id="IPR002845">
    <property type="entry name" value="tRNA_mtfrase_aTrm56"/>
</dbReference>
<dbReference type="NCBIfam" id="NF003048">
    <property type="entry name" value="PRK03958.1"/>
    <property type="match status" value="1"/>
</dbReference>
<dbReference type="PANTHER" id="PTHR42197">
    <property type="entry name" value="TRNA (CYTIDINE(56)-2'-O)-METHYLTRANSFERASE"/>
    <property type="match status" value="1"/>
</dbReference>
<dbReference type="PANTHER" id="PTHR42197:SF1">
    <property type="entry name" value="TRNA (CYTIDINE(56)-2'-O)-METHYLTRANSFERASE"/>
    <property type="match status" value="1"/>
</dbReference>
<dbReference type="Pfam" id="PF01994">
    <property type="entry name" value="Trm56"/>
    <property type="match status" value="1"/>
</dbReference>
<dbReference type="PIRSF" id="PIRSF016123">
    <property type="entry name" value="UCP016123"/>
    <property type="match status" value="1"/>
</dbReference>
<dbReference type="SUPFAM" id="SSF75217">
    <property type="entry name" value="alpha/beta knot"/>
    <property type="match status" value="1"/>
</dbReference>
<accession>Q8TL02</accession>
<reference key="1">
    <citation type="journal article" date="2002" name="Genome Res.">
        <title>The genome of Methanosarcina acetivorans reveals extensive metabolic and physiological diversity.</title>
        <authorList>
            <person name="Galagan J.E."/>
            <person name="Nusbaum C."/>
            <person name="Roy A."/>
            <person name="Endrizzi M.G."/>
            <person name="Macdonald P."/>
            <person name="FitzHugh W."/>
            <person name="Calvo S."/>
            <person name="Engels R."/>
            <person name="Smirnov S."/>
            <person name="Atnoor D."/>
            <person name="Brown A."/>
            <person name="Allen N."/>
            <person name="Naylor J."/>
            <person name="Stange-Thomann N."/>
            <person name="DeArellano K."/>
            <person name="Johnson R."/>
            <person name="Linton L."/>
            <person name="McEwan P."/>
            <person name="McKernan K."/>
            <person name="Talamas J."/>
            <person name="Tirrell A."/>
            <person name="Ye W."/>
            <person name="Zimmer A."/>
            <person name="Barber R.D."/>
            <person name="Cann I."/>
            <person name="Graham D.E."/>
            <person name="Grahame D.A."/>
            <person name="Guss A.M."/>
            <person name="Hedderich R."/>
            <person name="Ingram-Smith C."/>
            <person name="Kuettner H.C."/>
            <person name="Krzycki J.A."/>
            <person name="Leigh J.A."/>
            <person name="Li W."/>
            <person name="Liu J."/>
            <person name="Mukhopadhyay B."/>
            <person name="Reeve J.N."/>
            <person name="Smith K."/>
            <person name="Springer T.A."/>
            <person name="Umayam L.A."/>
            <person name="White O."/>
            <person name="White R.H."/>
            <person name="de Macario E.C."/>
            <person name="Ferry J.G."/>
            <person name="Jarrell K.F."/>
            <person name="Jing H."/>
            <person name="Macario A.J.L."/>
            <person name="Paulsen I.T."/>
            <person name="Pritchett M."/>
            <person name="Sowers K.R."/>
            <person name="Swanson R.V."/>
            <person name="Zinder S.H."/>
            <person name="Lander E."/>
            <person name="Metcalf W.W."/>
            <person name="Birren B."/>
        </authorList>
    </citation>
    <scope>NUCLEOTIDE SEQUENCE [LARGE SCALE GENOMIC DNA]</scope>
    <source>
        <strain>ATCC 35395 / DSM 2834 / JCM 12185 / C2A</strain>
    </source>
</reference>
<proteinExistence type="inferred from homology"/>
<gene>
    <name type="ordered locus">MA_3241</name>
</gene>